<protein>
    <recommendedName>
        <fullName evidence="1">Adenine phosphoribosyltransferase</fullName>
        <shortName evidence="1">APRT</shortName>
        <ecNumber evidence="1">2.4.2.7</ecNumber>
    </recommendedName>
</protein>
<organism>
    <name type="scientific">Bradyrhizobium diazoefficiens (strain JCM 10833 / BCRC 13528 / IAM 13628 / NBRC 14792 / USDA 110)</name>
    <dbReference type="NCBI Taxonomy" id="224911"/>
    <lineage>
        <taxon>Bacteria</taxon>
        <taxon>Pseudomonadati</taxon>
        <taxon>Pseudomonadota</taxon>
        <taxon>Alphaproteobacteria</taxon>
        <taxon>Hyphomicrobiales</taxon>
        <taxon>Nitrobacteraceae</taxon>
        <taxon>Bradyrhizobium</taxon>
    </lineage>
</organism>
<evidence type="ECO:0000255" key="1">
    <source>
        <dbReference type="HAMAP-Rule" id="MF_00004"/>
    </source>
</evidence>
<accession>Q89SB5</accession>
<comment type="function">
    <text evidence="1">Catalyzes a salvage reaction resulting in the formation of AMP, that is energically less costly than de novo synthesis.</text>
</comment>
<comment type="catalytic activity">
    <reaction evidence="1">
        <text>AMP + diphosphate = 5-phospho-alpha-D-ribose 1-diphosphate + adenine</text>
        <dbReference type="Rhea" id="RHEA:16609"/>
        <dbReference type="ChEBI" id="CHEBI:16708"/>
        <dbReference type="ChEBI" id="CHEBI:33019"/>
        <dbReference type="ChEBI" id="CHEBI:58017"/>
        <dbReference type="ChEBI" id="CHEBI:456215"/>
        <dbReference type="EC" id="2.4.2.7"/>
    </reaction>
</comment>
<comment type="pathway">
    <text evidence="1">Purine metabolism; AMP biosynthesis via salvage pathway; AMP from adenine: step 1/1.</text>
</comment>
<comment type="subunit">
    <text evidence="1">Homodimer.</text>
</comment>
<comment type="subcellular location">
    <subcellularLocation>
        <location evidence="1">Cytoplasm</location>
    </subcellularLocation>
</comment>
<comment type="similarity">
    <text evidence="1">Belongs to the purine/pyrimidine phosphoribosyltransferase family.</text>
</comment>
<keyword id="KW-0963">Cytoplasm</keyword>
<keyword id="KW-0328">Glycosyltransferase</keyword>
<keyword id="KW-0660">Purine salvage</keyword>
<keyword id="KW-1185">Reference proteome</keyword>
<keyword id="KW-0808">Transferase</keyword>
<proteinExistence type="inferred from homology"/>
<gene>
    <name evidence="1" type="primary">apt</name>
    <name type="ordered locus">blr2490</name>
</gene>
<name>APT_BRADU</name>
<dbReference type="EC" id="2.4.2.7" evidence="1"/>
<dbReference type="EMBL" id="BA000040">
    <property type="protein sequence ID" value="BAC47755.1"/>
    <property type="molecule type" value="Genomic_DNA"/>
</dbReference>
<dbReference type="RefSeq" id="NP_769130.1">
    <property type="nucleotide sequence ID" value="NC_004463.1"/>
</dbReference>
<dbReference type="RefSeq" id="WP_011085277.1">
    <property type="nucleotide sequence ID" value="NZ_CP011360.1"/>
</dbReference>
<dbReference type="SMR" id="Q89SB5"/>
<dbReference type="FunCoup" id="Q89SB5">
    <property type="interactions" value="514"/>
</dbReference>
<dbReference type="STRING" id="224911.AAV28_09375"/>
<dbReference type="EnsemblBacteria" id="BAC47755">
    <property type="protein sequence ID" value="BAC47755"/>
    <property type="gene ID" value="BAC47755"/>
</dbReference>
<dbReference type="KEGG" id="bja:blr2490"/>
<dbReference type="PATRIC" id="fig|224911.44.peg.2061"/>
<dbReference type="eggNOG" id="COG0503">
    <property type="taxonomic scope" value="Bacteria"/>
</dbReference>
<dbReference type="HOGENOM" id="CLU_063339_3_0_5"/>
<dbReference type="InParanoid" id="Q89SB5"/>
<dbReference type="OrthoDB" id="9803963at2"/>
<dbReference type="PhylomeDB" id="Q89SB5"/>
<dbReference type="UniPathway" id="UPA00588">
    <property type="reaction ID" value="UER00646"/>
</dbReference>
<dbReference type="Proteomes" id="UP000002526">
    <property type="component" value="Chromosome"/>
</dbReference>
<dbReference type="GO" id="GO:0005737">
    <property type="term" value="C:cytoplasm"/>
    <property type="evidence" value="ECO:0000318"/>
    <property type="project" value="GO_Central"/>
</dbReference>
<dbReference type="GO" id="GO:0002055">
    <property type="term" value="F:adenine binding"/>
    <property type="evidence" value="ECO:0000318"/>
    <property type="project" value="GO_Central"/>
</dbReference>
<dbReference type="GO" id="GO:0003999">
    <property type="term" value="F:adenine phosphoribosyltransferase activity"/>
    <property type="evidence" value="ECO:0000318"/>
    <property type="project" value="GO_Central"/>
</dbReference>
<dbReference type="GO" id="GO:0016208">
    <property type="term" value="F:AMP binding"/>
    <property type="evidence" value="ECO:0000318"/>
    <property type="project" value="GO_Central"/>
</dbReference>
<dbReference type="GO" id="GO:0006168">
    <property type="term" value="P:adenine salvage"/>
    <property type="evidence" value="ECO:0000318"/>
    <property type="project" value="GO_Central"/>
</dbReference>
<dbReference type="GO" id="GO:0044209">
    <property type="term" value="P:AMP salvage"/>
    <property type="evidence" value="ECO:0000318"/>
    <property type="project" value="GO_Central"/>
</dbReference>
<dbReference type="GO" id="GO:0006166">
    <property type="term" value="P:purine ribonucleoside salvage"/>
    <property type="evidence" value="ECO:0007669"/>
    <property type="project" value="UniProtKB-KW"/>
</dbReference>
<dbReference type="CDD" id="cd06223">
    <property type="entry name" value="PRTases_typeI"/>
    <property type="match status" value="1"/>
</dbReference>
<dbReference type="FunFam" id="3.40.50.2020:FF:000021">
    <property type="entry name" value="Adenine phosphoribosyltransferase"/>
    <property type="match status" value="1"/>
</dbReference>
<dbReference type="Gene3D" id="3.40.50.2020">
    <property type="match status" value="1"/>
</dbReference>
<dbReference type="HAMAP" id="MF_00004">
    <property type="entry name" value="Aden_phosphoribosyltr"/>
    <property type="match status" value="1"/>
</dbReference>
<dbReference type="InterPro" id="IPR005764">
    <property type="entry name" value="Ade_phspho_trans"/>
</dbReference>
<dbReference type="InterPro" id="IPR000836">
    <property type="entry name" value="PRibTrfase_dom"/>
</dbReference>
<dbReference type="InterPro" id="IPR029057">
    <property type="entry name" value="PRTase-like"/>
</dbReference>
<dbReference type="InterPro" id="IPR050054">
    <property type="entry name" value="UPRTase/APRTase"/>
</dbReference>
<dbReference type="NCBIfam" id="TIGR01090">
    <property type="entry name" value="apt"/>
    <property type="match status" value="1"/>
</dbReference>
<dbReference type="NCBIfam" id="NF002634">
    <property type="entry name" value="PRK02304.1-3"/>
    <property type="match status" value="1"/>
</dbReference>
<dbReference type="NCBIfam" id="NF002636">
    <property type="entry name" value="PRK02304.1-5"/>
    <property type="match status" value="1"/>
</dbReference>
<dbReference type="PANTHER" id="PTHR32315">
    <property type="entry name" value="ADENINE PHOSPHORIBOSYLTRANSFERASE"/>
    <property type="match status" value="1"/>
</dbReference>
<dbReference type="PANTHER" id="PTHR32315:SF3">
    <property type="entry name" value="ADENINE PHOSPHORIBOSYLTRANSFERASE"/>
    <property type="match status" value="1"/>
</dbReference>
<dbReference type="Pfam" id="PF00156">
    <property type="entry name" value="Pribosyltran"/>
    <property type="match status" value="1"/>
</dbReference>
<dbReference type="SUPFAM" id="SSF53271">
    <property type="entry name" value="PRTase-like"/>
    <property type="match status" value="1"/>
</dbReference>
<dbReference type="PROSITE" id="PS00103">
    <property type="entry name" value="PUR_PYR_PR_TRANSFER"/>
    <property type="match status" value="1"/>
</dbReference>
<feature type="chain" id="PRO_0000149363" description="Adenine phosphoribosyltransferase">
    <location>
        <begin position="1"/>
        <end position="179"/>
    </location>
</feature>
<sequence>MTFDHDLKASVRTIPDYPKPGIMFRDITTLLADARAFRRAVDELVNPWAGNKIDKVAGMEARGFIIGGAVAHQLSAGFVPIRKKGKLPHTTVRIAYSLEYGIDEMEMHVDAIQPGERVILVDDLIATGGTAEGAVKLLRQIGANVVAACFIIDLPELGGAAKLRAMDVPVRTLMTFEGH</sequence>
<reference key="1">
    <citation type="journal article" date="2002" name="DNA Res.">
        <title>Complete genomic sequence of nitrogen-fixing symbiotic bacterium Bradyrhizobium japonicum USDA110.</title>
        <authorList>
            <person name="Kaneko T."/>
            <person name="Nakamura Y."/>
            <person name="Sato S."/>
            <person name="Minamisawa K."/>
            <person name="Uchiumi T."/>
            <person name="Sasamoto S."/>
            <person name="Watanabe A."/>
            <person name="Idesawa K."/>
            <person name="Iriguchi M."/>
            <person name="Kawashima K."/>
            <person name="Kohara M."/>
            <person name="Matsumoto M."/>
            <person name="Shimpo S."/>
            <person name="Tsuruoka H."/>
            <person name="Wada T."/>
            <person name="Yamada M."/>
            <person name="Tabata S."/>
        </authorList>
    </citation>
    <scope>NUCLEOTIDE SEQUENCE [LARGE SCALE GENOMIC DNA]</scope>
    <source>
        <strain>JCM 10833 / BCRC 13528 / IAM 13628 / NBRC 14792 / USDA 110</strain>
    </source>
</reference>